<dbReference type="EMBL" id="CP000227">
    <property type="protein sequence ID" value="ACM14041.1"/>
    <property type="molecule type" value="Genomic_DNA"/>
</dbReference>
<dbReference type="SMR" id="B9IVB7"/>
<dbReference type="KEGG" id="bcq:BCQ_3613"/>
<dbReference type="HOGENOM" id="CLU_089581_0_0_9"/>
<dbReference type="Proteomes" id="UP000000441">
    <property type="component" value="Chromosome"/>
</dbReference>
<dbReference type="GO" id="GO:0005737">
    <property type="term" value="C:cytoplasm"/>
    <property type="evidence" value="ECO:0007669"/>
    <property type="project" value="UniProtKB-SubCell"/>
</dbReference>
<dbReference type="GO" id="GO:0003677">
    <property type="term" value="F:DNA binding"/>
    <property type="evidence" value="ECO:0007669"/>
    <property type="project" value="UniProtKB-UniRule"/>
</dbReference>
<dbReference type="GO" id="GO:0003700">
    <property type="term" value="F:DNA-binding transcription factor activity"/>
    <property type="evidence" value="ECO:0007669"/>
    <property type="project" value="InterPro"/>
</dbReference>
<dbReference type="GO" id="GO:0005525">
    <property type="term" value="F:GTP binding"/>
    <property type="evidence" value="ECO:0007669"/>
    <property type="project" value="InterPro"/>
</dbReference>
<dbReference type="GO" id="GO:0045892">
    <property type="term" value="P:negative regulation of DNA-templated transcription"/>
    <property type="evidence" value="ECO:0007669"/>
    <property type="project" value="UniProtKB-UniRule"/>
</dbReference>
<dbReference type="FunFam" id="1.10.10.10:FF:000034">
    <property type="entry name" value="GTP-sensing transcriptional pleiotropic repressor CodY"/>
    <property type="match status" value="1"/>
</dbReference>
<dbReference type="FunFam" id="3.30.450.40:FF:000003">
    <property type="entry name" value="GTP-sensing transcriptional pleiotropic repressor CodY"/>
    <property type="match status" value="1"/>
</dbReference>
<dbReference type="Gene3D" id="3.30.450.40">
    <property type="match status" value="1"/>
</dbReference>
<dbReference type="Gene3D" id="1.10.10.10">
    <property type="entry name" value="Winged helix-like DNA-binding domain superfamily/Winged helix DNA-binding domain"/>
    <property type="match status" value="1"/>
</dbReference>
<dbReference type="HAMAP" id="MF_00621">
    <property type="entry name" value="HTH_type_CodY"/>
    <property type="match status" value="1"/>
</dbReference>
<dbReference type="InterPro" id="IPR014154">
    <property type="entry name" value="CodY"/>
</dbReference>
<dbReference type="InterPro" id="IPR029016">
    <property type="entry name" value="GAF-like_dom_sf"/>
</dbReference>
<dbReference type="InterPro" id="IPR013198">
    <property type="entry name" value="GTP_trans_reg_CodY_C"/>
</dbReference>
<dbReference type="InterPro" id="IPR010312">
    <property type="entry name" value="Transc_reg_CodY_N"/>
</dbReference>
<dbReference type="InterPro" id="IPR036388">
    <property type="entry name" value="WH-like_DNA-bd_sf"/>
</dbReference>
<dbReference type="InterPro" id="IPR036390">
    <property type="entry name" value="WH_DNA-bd_sf"/>
</dbReference>
<dbReference type="NCBIfam" id="TIGR02787">
    <property type="entry name" value="codY_Gpos"/>
    <property type="match status" value="1"/>
</dbReference>
<dbReference type="NCBIfam" id="NF003170">
    <property type="entry name" value="PRK04158.1"/>
    <property type="match status" value="1"/>
</dbReference>
<dbReference type="PANTHER" id="PTHR40062:SF1">
    <property type="entry name" value="GLOBAL TRANSCRIPTIONAL REGULATOR CODY"/>
    <property type="match status" value="1"/>
</dbReference>
<dbReference type="PANTHER" id="PTHR40062">
    <property type="entry name" value="GTP-SENSING TRANSCRIPTIONAL PLEIOTROPIC REPRESSOR CODY"/>
    <property type="match status" value="1"/>
</dbReference>
<dbReference type="Pfam" id="PF06018">
    <property type="entry name" value="CodY"/>
    <property type="match status" value="1"/>
</dbReference>
<dbReference type="Pfam" id="PF08222">
    <property type="entry name" value="HTH_CodY"/>
    <property type="match status" value="1"/>
</dbReference>
<dbReference type="PIRSF" id="PIRSF011572">
    <property type="entry name" value="GTP_sensing_CodY"/>
    <property type="match status" value="1"/>
</dbReference>
<dbReference type="SUPFAM" id="SSF46785">
    <property type="entry name" value="Winged helix' DNA-binding domain"/>
    <property type="match status" value="1"/>
</dbReference>
<gene>
    <name evidence="1" type="primary">codY</name>
    <name type="ordered locus">BCQ_3613</name>
</gene>
<organism>
    <name type="scientific">Bacillus cereus (strain Q1)</name>
    <dbReference type="NCBI Taxonomy" id="361100"/>
    <lineage>
        <taxon>Bacteria</taxon>
        <taxon>Bacillati</taxon>
        <taxon>Bacillota</taxon>
        <taxon>Bacilli</taxon>
        <taxon>Bacillales</taxon>
        <taxon>Bacillaceae</taxon>
        <taxon>Bacillus</taxon>
        <taxon>Bacillus cereus group</taxon>
    </lineage>
</organism>
<feature type="chain" id="PRO_1000147201" description="Global transcriptional regulator CodY">
    <location>
        <begin position="1"/>
        <end position="259"/>
    </location>
</feature>
<feature type="DNA-binding region" description="H-T-H motif" evidence="1">
    <location>
        <begin position="203"/>
        <end position="222"/>
    </location>
</feature>
<feature type="region of interest" description="GAF domain" evidence="1">
    <location>
        <begin position="1"/>
        <end position="155"/>
    </location>
</feature>
<feature type="modified residue" description="Phosphoserine" evidence="1">
    <location>
        <position position="215"/>
    </location>
</feature>
<protein>
    <recommendedName>
        <fullName evidence="1">Global transcriptional regulator CodY</fullName>
    </recommendedName>
</protein>
<comment type="function">
    <text evidence="1">DNA-binding global transcriptional regulator which is involved in the adaptive response to starvation and acts by directly or indirectly controlling the expression of numerous genes in response to nutrient availability. During rapid exponential growth, CodY is highly active and represses genes whose products allow adaptation to nutrient depletion.</text>
</comment>
<comment type="subcellular location">
    <subcellularLocation>
        <location evidence="1">Cytoplasm</location>
    </subcellularLocation>
</comment>
<comment type="similarity">
    <text evidence="1">Belongs to the CodY family.</text>
</comment>
<reference key="1">
    <citation type="journal article" date="2009" name="J. Bacteriol.">
        <title>Complete genome sequence of the extremophilic Bacillus cereus strain Q1 with industrial applications.</title>
        <authorList>
            <person name="Xiong Z."/>
            <person name="Jiang Y."/>
            <person name="Qi D."/>
            <person name="Lu H."/>
            <person name="Yang F."/>
            <person name="Yang J."/>
            <person name="Chen L."/>
            <person name="Sun L."/>
            <person name="Xu X."/>
            <person name="Xue Y."/>
            <person name="Zhu Y."/>
            <person name="Jin Q."/>
        </authorList>
    </citation>
    <scope>NUCLEOTIDE SEQUENCE [LARGE SCALE GENOMIC DNA]</scope>
    <source>
        <strain>Q1</strain>
    </source>
</reference>
<evidence type="ECO:0000255" key="1">
    <source>
        <dbReference type="HAMAP-Rule" id="MF_00621"/>
    </source>
</evidence>
<sequence length="259" mass="28774">MELLAKTRKLNALLQSAAGKPVNFREMSDTMCEVIEANVFVVSRRGKLLGYAIHQQIENERMKQMLAERQFPEEYTQSLFNITETSSNLDVNSAYTAFPVENKELFGQGLTTIVPIVGGGERLGTLVLARLGQEFLDDDLILAEYSSTVVGMEILREKAEEIEEEARSKAVVQMAISSLSYSELEAIEHIFEELNGTEGLLVASKIADRVGITRSVIVNALRKLESAGVIESRSLGMKGTYIKVLNDKFLHELAKLKTN</sequence>
<accession>B9IVB7</accession>
<keyword id="KW-0963">Cytoplasm</keyword>
<keyword id="KW-0238">DNA-binding</keyword>
<keyword id="KW-0597">Phosphoprotein</keyword>
<keyword id="KW-0678">Repressor</keyword>
<keyword id="KW-0804">Transcription</keyword>
<keyword id="KW-0805">Transcription regulation</keyword>
<proteinExistence type="inferred from homology"/>
<name>CODY_BACCQ</name>